<name>Y860_XANCP</name>
<dbReference type="EMBL" id="AE008922">
    <property type="protein sequence ID" value="AAM40175.1"/>
    <property type="molecule type" value="Genomic_DNA"/>
</dbReference>
<dbReference type="RefSeq" id="NP_636251.1">
    <property type="nucleotide sequence ID" value="NC_003902.1"/>
</dbReference>
<dbReference type="RefSeq" id="WP_011036096.1">
    <property type="nucleotide sequence ID" value="NC_003902.1"/>
</dbReference>
<dbReference type="SMR" id="Q8PC75"/>
<dbReference type="STRING" id="190485.XCC0860"/>
<dbReference type="EnsemblBacteria" id="AAM40175">
    <property type="protein sequence ID" value="AAM40175"/>
    <property type="gene ID" value="XCC0860"/>
</dbReference>
<dbReference type="KEGG" id="xcc:XCC0860"/>
<dbReference type="PATRIC" id="fig|190485.4.peg.936"/>
<dbReference type="eggNOG" id="COG1295">
    <property type="taxonomic scope" value="Bacteria"/>
</dbReference>
<dbReference type="HOGENOM" id="CLU_032288_1_0_6"/>
<dbReference type="OrthoDB" id="9808671at2"/>
<dbReference type="Proteomes" id="UP000001010">
    <property type="component" value="Chromosome"/>
</dbReference>
<dbReference type="GO" id="GO:0005886">
    <property type="term" value="C:plasma membrane"/>
    <property type="evidence" value="ECO:0000318"/>
    <property type="project" value="GO_Central"/>
</dbReference>
<dbReference type="HAMAP" id="MF_00672">
    <property type="entry name" value="UPF0761"/>
    <property type="match status" value="1"/>
</dbReference>
<dbReference type="InterPro" id="IPR023679">
    <property type="entry name" value="UPF0761_bac"/>
</dbReference>
<dbReference type="InterPro" id="IPR017039">
    <property type="entry name" value="Virul_fac_BrkB"/>
</dbReference>
<dbReference type="NCBIfam" id="NF003256">
    <property type="entry name" value="PRK04214.1"/>
    <property type="match status" value="1"/>
</dbReference>
<dbReference type="NCBIfam" id="TIGR00765">
    <property type="entry name" value="yihY_not_rbn"/>
    <property type="match status" value="1"/>
</dbReference>
<dbReference type="PANTHER" id="PTHR30213">
    <property type="entry name" value="INNER MEMBRANE PROTEIN YHJD"/>
    <property type="match status" value="1"/>
</dbReference>
<dbReference type="PANTHER" id="PTHR30213:SF0">
    <property type="entry name" value="UPF0761 MEMBRANE PROTEIN YIHY"/>
    <property type="match status" value="1"/>
</dbReference>
<dbReference type="Pfam" id="PF03631">
    <property type="entry name" value="Virul_fac_BrkB"/>
    <property type="match status" value="1"/>
</dbReference>
<keyword id="KW-0997">Cell inner membrane</keyword>
<keyword id="KW-1003">Cell membrane</keyword>
<keyword id="KW-0472">Membrane</keyword>
<keyword id="KW-1185">Reference proteome</keyword>
<keyword id="KW-0812">Transmembrane</keyword>
<keyword id="KW-1133">Transmembrane helix</keyword>
<protein>
    <recommendedName>
        <fullName evidence="1">UPF0761 membrane protein XCC0860</fullName>
    </recommendedName>
</protein>
<proteinExistence type="inferred from homology"/>
<accession>Q8PC75</accession>
<reference key="1">
    <citation type="journal article" date="2002" name="Nature">
        <title>Comparison of the genomes of two Xanthomonas pathogens with differing host specificities.</title>
        <authorList>
            <person name="da Silva A.C.R."/>
            <person name="Ferro J.A."/>
            <person name="Reinach F.C."/>
            <person name="Farah C.S."/>
            <person name="Furlan L.R."/>
            <person name="Quaggio R.B."/>
            <person name="Monteiro-Vitorello C.B."/>
            <person name="Van Sluys M.A."/>
            <person name="Almeida N.F. Jr."/>
            <person name="Alves L.M.C."/>
            <person name="do Amaral A.M."/>
            <person name="Bertolini M.C."/>
            <person name="Camargo L.E.A."/>
            <person name="Camarotte G."/>
            <person name="Cannavan F."/>
            <person name="Cardozo J."/>
            <person name="Chambergo F."/>
            <person name="Ciapina L.P."/>
            <person name="Cicarelli R.M.B."/>
            <person name="Coutinho L.L."/>
            <person name="Cursino-Santos J.R."/>
            <person name="El-Dorry H."/>
            <person name="Faria J.B."/>
            <person name="Ferreira A.J.S."/>
            <person name="Ferreira R.C.C."/>
            <person name="Ferro M.I.T."/>
            <person name="Formighieri E.F."/>
            <person name="Franco M.C."/>
            <person name="Greggio C.C."/>
            <person name="Gruber A."/>
            <person name="Katsuyama A.M."/>
            <person name="Kishi L.T."/>
            <person name="Leite R.P."/>
            <person name="Lemos E.G.M."/>
            <person name="Lemos M.V.F."/>
            <person name="Locali E.C."/>
            <person name="Machado M.A."/>
            <person name="Madeira A.M.B.N."/>
            <person name="Martinez-Rossi N.M."/>
            <person name="Martins E.C."/>
            <person name="Meidanis J."/>
            <person name="Menck C.F.M."/>
            <person name="Miyaki C.Y."/>
            <person name="Moon D.H."/>
            <person name="Moreira L.M."/>
            <person name="Novo M.T.M."/>
            <person name="Okura V.K."/>
            <person name="Oliveira M.C."/>
            <person name="Oliveira V.R."/>
            <person name="Pereira H.A."/>
            <person name="Rossi A."/>
            <person name="Sena J.A.D."/>
            <person name="Silva C."/>
            <person name="de Souza R.F."/>
            <person name="Spinola L.A.F."/>
            <person name="Takita M.A."/>
            <person name="Tamura R.E."/>
            <person name="Teixeira E.C."/>
            <person name="Tezza R.I.D."/>
            <person name="Trindade dos Santos M."/>
            <person name="Truffi D."/>
            <person name="Tsai S.M."/>
            <person name="White F.F."/>
            <person name="Setubal J.C."/>
            <person name="Kitajima J.P."/>
        </authorList>
    </citation>
    <scope>NUCLEOTIDE SEQUENCE [LARGE SCALE GENOMIC DNA]</scope>
    <source>
        <strain>ATCC 33913 / DSM 3586 / NCPPB 528 / LMG 568 / P 25</strain>
    </source>
</reference>
<gene>
    <name type="ordered locus">XCC0860</name>
</gene>
<comment type="subcellular location">
    <subcellularLocation>
        <location evidence="1">Cell inner membrane</location>
        <topology evidence="1">Multi-pass membrane protein</topology>
    </subcellularLocation>
</comment>
<comment type="similarity">
    <text evidence="1">Belongs to the UPF0761 family.</text>
</comment>
<sequence length="425" mass="48207">MSRVNTMHQWKERLRDRARTASFGRFLWRRFLDDRLFQAAASLAYTTVFALVPLAIVVFGVLSAFPAFNEWKDALTDFIFNNFVPGAARSVQNYLNRSLEDLGKFTVAGMVALVASLLITLHSIEQTFNSIWRVAAARPKVTRFLIYWTVLTLGTMLAAASMAMAAYVFALPLFRTTEGQWLAEFAWRLAPMAVEFVCIVLIYRVVPQHAVRLRHALPGALLAVILMEIVKWGFGFYLGNFQTYQRIYGALSALPILLLWIYLSWVSVLLGASLASSMSAFRYQPEAMRLPPGFEIYGLLRLLGRFRQARLHGNGLDEDRILALEPMLTDTLMQELLCELKRIRLLRRDERGNWLLARDLDVVPLAELYESCQLRVPVEDRPLPCRDDPYGQAAAAALEQLRQPLRSVLAQPVGDLYTHLPGDPP</sequence>
<organism>
    <name type="scientific">Xanthomonas campestris pv. campestris (strain ATCC 33913 / DSM 3586 / NCPPB 528 / LMG 568 / P 25)</name>
    <dbReference type="NCBI Taxonomy" id="190485"/>
    <lineage>
        <taxon>Bacteria</taxon>
        <taxon>Pseudomonadati</taxon>
        <taxon>Pseudomonadota</taxon>
        <taxon>Gammaproteobacteria</taxon>
        <taxon>Lysobacterales</taxon>
        <taxon>Lysobacteraceae</taxon>
        <taxon>Xanthomonas</taxon>
    </lineage>
</organism>
<feature type="chain" id="PRO_0000201004" description="UPF0761 membrane protein XCC0860">
    <location>
        <begin position="1"/>
        <end position="425"/>
    </location>
</feature>
<feature type="transmembrane region" description="Helical" evidence="1">
    <location>
        <begin position="48"/>
        <end position="68"/>
    </location>
</feature>
<feature type="transmembrane region" description="Helical" evidence="1">
    <location>
        <begin position="105"/>
        <end position="125"/>
    </location>
</feature>
<feature type="transmembrane region" description="Helical" evidence="1">
    <location>
        <begin position="154"/>
        <end position="174"/>
    </location>
</feature>
<feature type="transmembrane region" description="Helical" evidence="1">
    <location>
        <begin position="182"/>
        <end position="202"/>
    </location>
</feature>
<feature type="transmembrane region" description="Helical" evidence="1">
    <location>
        <begin position="216"/>
        <end position="236"/>
    </location>
</feature>
<feature type="transmembrane region" description="Helical" evidence="1">
    <location>
        <begin position="250"/>
        <end position="270"/>
    </location>
</feature>
<evidence type="ECO:0000255" key="1">
    <source>
        <dbReference type="HAMAP-Rule" id="MF_00672"/>
    </source>
</evidence>